<organism>
    <name type="scientific">Borrelia turicatae (strain 91E135)</name>
    <dbReference type="NCBI Taxonomy" id="314724"/>
    <lineage>
        <taxon>Bacteria</taxon>
        <taxon>Pseudomonadati</taxon>
        <taxon>Spirochaetota</taxon>
        <taxon>Spirochaetia</taxon>
        <taxon>Spirochaetales</taxon>
        <taxon>Borreliaceae</taxon>
        <taxon>Borrelia</taxon>
    </lineage>
</organism>
<comment type="function">
    <text evidence="1">One of the primary rRNA binding proteins, it binds directly to 16S rRNA where it helps nucleate assembly of the platform of the 30S subunit by binding and bridging several RNA helices of the 16S rRNA.</text>
</comment>
<comment type="function">
    <text evidence="1">Forms an intersubunit bridge (bridge B4) with the 23S rRNA of the 50S subunit in the ribosome.</text>
</comment>
<comment type="subunit">
    <text evidence="1">Part of the 30S ribosomal subunit. Forms a bridge to the 50S subunit in the 70S ribosome, contacting the 23S rRNA.</text>
</comment>
<comment type="similarity">
    <text evidence="1">Belongs to the universal ribosomal protein uS15 family.</text>
</comment>
<dbReference type="EMBL" id="CP000049">
    <property type="protein sequence ID" value="AAX18120.1"/>
    <property type="molecule type" value="Genomic_DNA"/>
</dbReference>
<dbReference type="RefSeq" id="WP_011772738.1">
    <property type="nucleotide sequence ID" value="NZ_CP073176.1"/>
</dbReference>
<dbReference type="SMR" id="A1R0M9"/>
<dbReference type="KEGG" id="btu:BT0804"/>
<dbReference type="eggNOG" id="COG0184">
    <property type="taxonomic scope" value="Bacteria"/>
</dbReference>
<dbReference type="HOGENOM" id="CLU_148518_0_0_12"/>
<dbReference type="Proteomes" id="UP000001205">
    <property type="component" value="Chromosome"/>
</dbReference>
<dbReference type="GO" id="GO:0022627">
    <property type="term" value="C:cytosolic small ribosomal subunit"/>
    <property type="evidence" value="ECO:0007669"/>
    <property type="project" value="TreeGrafter"/>
</dbReference>
<dbReference type="GO" id="GO:0019843">
    <property type="term" value="F:rRNA binding"/>
    <property type="evidence" value="ECO:0007669"/>
    <property type="project" value="UniProtKB-UniRule"/>
</dbReference>
<dbReference type="GO" id="GO:0003735">
    <property type="term" value="F:structural constituent of ribosome"/>
    <property type="evidence" value="ECO:0007669"/>
    <property type="project" value="InterPro"/>
</dbReference>
<dbReference type="GO" id="GO:0006412">
    <property type="term" value="P:translation"/>
    <property type="evidence" value="ECO:0007669"/>
    <property type="project" value="UniProtKB-UniRule"/>
</dbReference>
<dbReference type="CDD" id="cd00353">
    <property type="entry name" value="Ribosomal_S15p_S13e"/>
    <property type="match status" value="1"/>
</dbReference>
<dbReference type="FunFam" id="1.10.287.10:FF:000002">
    <property type="entry name" value="30S ribosomal protein S15"/>
    <property type="match status" value="1"/>
</dbReference>
<dbReference type="Gene3D" id="6.10.250.3130">
    <property type="match status" value="1"/>
</dbReference>
<dbReference type="Gene3D" id="1.10.287.10">
    <property type="entry name" value="S15/NS1, RNA-binding"/>
    <property type="match status" value="1"/>
</dbReference>
<dbReference type="HAMAP" id="MF_01343_B">
    <property type="entry name" value="Ribosomal_uS15_B"/>
    <property type="match status" value="1"/>
</dbReference>
<dbReference type="InterPro" id="IPR000589">
    <property type="entry name" value="Ribosomal_uS15"/>
</dbReference>
<dbReference type="InterPro" id="IPR005290">
    <property type="entry name" value="Ribosomal_uS15_bac-type"/>
</dbReference>
<dbReference type="InterPro" id="IPR009068">
    <property type="entry name" value="uS15_NS1_RNA-bd_sf"/>
</dbReference>
<dbReference type="NCBIfam" id="TIGR00952">
    <property type="entry name" value="S15_bact"/>
    <property type="match status" value="1"/>
</dbReference>
<dbReference type="PANTHER" id="PTHR23321">
    <property type="entry name" value="RIBOSOMAL PROTEIN S15, BACTERIAL AND ORGANELLAR"/>
    <property type="match status" value="1"/>
</dbReference>
<dbReference type="PANTHER" id="PTHR23321:SF26">
    <property type="entry name" value="SMALL RIBOSOMAL SUBUNIT PROTEIN US15M"/>
    <property type="match status" value="1"/>
</dbReference>
<dbReference type="Pfam" id="PF00312">
    <property type="entry name" value="Ribosomal_S15"/>
    <property type="match status" value="1"/>
</dbReference>
<dbReference type="SMART" id="SM01387">
    <property type="entry name" value="Ribosomal_S15"/>
    <property type="match status" value="1"/>
</dbReference>
<dbReference type="SUPFAM" id="SSF47060">
    <property type="entry name" value="S15/NS1 RNA-binding domain"/>
    <property type="match status" value="1"/>
</dbReference>
<dbReference type="PROSITE" id="PS00362">
    <property type="entry name" value="RIBOSOMAL_S15"/>
    <property type="match status" value="1"/>
</dbReference>
<gene>
    <name evidence="1" type="primary">rpsO</name>
    <name type="ordered locus">BT0804</name>
</gene>
<feature type="chain" id="PRO_1000166403" description="Small ribosomal subunit protein uS15">
    <location>
        <begin position="1"/>
        <end position="88"/>
    </location>
</feature>
<accession>A1R0M9</accession>
<reference key="1">
    <citation type="submission" date="2004-12" db="EMBL/GenBank/DDBJ databases">
        <title>The genome sequence of Borrelia hermsii and Borrelia turicatae: comparative analysis of two agents of endemic N. America relapsing fever.</title>
        <authorList>
            <person name="Porcella S.F."/>
            <person name="Raffel S.J."/>
            <person name="Schrumpf M.E."/>
            <person name="Montgomery B."/>
            <person name="Smith T."/>
            <person name="Schwan T.G."/>
        </authorList>
    </citation>
    <scope>NUCLEOTIDE SEQUENCE [LARGE SCALE GENOMIC DNA]</scope>
    <source>
        <strain>91E135</strain>
    </source>
</reference>
<name>RS15_BORT9</name>
<protein>
    <recommendedName>
        <fullName evidence="1">Small ribosomal subunit protein uS15</fullName>
    </recommendedName>
    <alternativeName>
        <fullName evidence="2">30S ribosomal protein S15</fullName>
    </alternativeName>
</protein>
<evidence type="ECO:0000255" key="1">
    <source>
        <dbReference type="HAMAP-Rule" id="MF_01343"/>
    </source>
</evidence>
<evidence type="ECO:0000305" key="2"/>
<keyword id="KW-1185">Reference proteome</keyword>
<keyword id="KW-0687">Ribonucleoprotein</keyword>
<keyword id="KW-0689">Ribosomal protein</keyword>
<keyword id="KW-0694">RNA-binding</keyword>
<keyword id="KW-0699">rRNA-binding</keyword>
<proteinExistence type="inferred from homology"/>
<sequence>MISKEQKQKIITEFGKNPNDTGSVEVQIALITDRIRYLTEHLRSNKKDHSSKRGLLKLVGQRRNLLRYYQKKNLEAYRTLIAKLGLRK</sequence>